<reference key="1">
    <citation type="journal article" date="2013" name="PLoS ONE">
        <title>Mass fingerprinting of the venom and transcriptome of venom gland of scorpion Centruroides tecomanus.</title>
        <authorList>
            <person name="Valdez-Velazquez L.L."/>
            <person name="Quintero-Hernandez V."/>
            <person name="Romero-Gutierrez M.T."/>
            <person name="Coronas F.I."/>
            <person name="Possani L.D."/>
        </authorList>
    </citation>
    <scope>NUCLEOTIDE SEQUENCE [MRNA]</scope>
    <scope>PROTEIN SEQUENCE OF 20-47</scope>
    <scope>PROBABLE AMIDATION AT THR-82</scope>
    <scope>MASS SPECTROMETRY</scope>
    <scope>SUBCELLULAR LOCATION</scope>
    <source>
        <tissue>Venom</tissue>
        <tissue>Venom gland</tissue>
    </source>
</reference>
<reference key="2">
    <citation type="journal article" date="2016" name="Toxicon">
        <title>Comprehensive analysis of venom from the scorpion Centruroides tecomanus reveals compounds with antimicrobial, cytotoxic, and insecticidal activities.</title>
        <authorList>
            <person name="Valdez-Velazquez L.L."/>
            <person name="Romero-Gutierrez M.T."/>
            <person name="Delgado-Enciso I."/>
            <person name="Dobrovinskaya O."/>
            <person name="Melnikov V."/>
            <person name="Quintero-Hernandez V."/>
            <person name="Ceballos-Magana S.G."/>
            <person name="Gaitan-Hinojosa M.A."/>
            <person name="Coronas F.I."/>
            <person name="Puebla-Perez A.M."/>
            <person name="Zamudio F."/>
            <person name="De la Cruz-Garcia I."/>
            <person name="Vazquez-Vuelvas O.F."/>
            <person name="Soriano-Hernandez A.D."/>
            <person name="Possani L.D."/>
        </authorList>
    </citation>
    <scope>FUNCTION</scope>
    <source>
        <tissue>Venom</tissue>
    </source>
</reference>
<dbReference type="EMBL" id="JZ122280">
    <property type="status" value="NOT_ANNOTATED_CDS"/>
    <property type="molecule type" value="mRNA"/>
</dbReference>
<dbReference type="SMR" id="P0DUI1"/>
<dbReference type="GO" id="GO:0005576">
    <property type="term" value="C:extracellular region"/>
    <property type="evidence" value="ECO:0000314"/>
    <property type="project" value="UniProtKB"/>
</dbReference>
<dbReference type="GO" id="GO:0019871">
    <property type="term" value="F:sodium channel inhibitor activity"/>
    <property type="evidence" value="ECO:0007669"/>
    <property type="project" value="InterPro"/>
</dbReference>
<dbReference type="GO" id="GO:0090729">
    <property type="term" value="F:toxin activity"/>
    <property type="evidence" value="ECO:0007669"/>
    <property type="project" value="UniProtKB-KW"/>
</dbReference>
<dbReference type="GO" id="GO:0006952">
    <property type="term" value="P:defense response"/>
    <property type="evidence" value="ECO:0007669"/>
    <property type="project" value="InterPro"/>
</dbReference>
<dbReference type="CDD" id="cd23106">
    <property type="entry name" value="neurotoxins_LC_scorpion"/>
    <property type="match status" value="1"/>
</dbReference>
<dbReference type="Gene3D" id="3.30.30.10">
    <property type="entry name" value="Knottin, scorpion toxin-like"/>
    <property type="match status" value="1"/>
</dbReference>
<dbReference type="InterPro" id="IPR044062">
    <property type="entry name" value="LCN-type_CS_alpha_beta_dom"/>
</dbReference>
<dbReference type="InterPro" id="IPR003614">
    <property type="entry name" value="Scorpion_toxin-like"/>
</dbReference>
<dbReference type="InterPro" id="IPR036574">
    <property type="entry name" value="Scorpion_toxin-like_sf"/>
</dbReference>
<dbReference type="InterPro" id="IPR018218">
    <property type="entry name" value="Scorpion_toxinL"/>
</dbReference>
<dbReference type="InterPro" id="IPR002061">
    <property type="entry name" value="Scorpion_toxinL/defensin"/>
</dbReference>
<dbReference type="Pfam" id="PF00537">
    <property type="entry name" value="Toxin_3"/>
    <property type="match status" value="1"/>
</dbReference>
<dbReference type="PRINTS" id="PR00285">
    <property type="entry name" value="SCORPNTOXIN"/>
</dbReference>
<dbReference type="SMART" id="SM00505">
    <property type="entry name" value="Knot1"/>
    <property type="match status" value="1"/>
</dbReference>
<dbReference type="SUPFAM" id="SSF57095">
    <property type="entry name" value="Scorpion toxin-like"/>
    <property type="match status" value="1"/>
</dbReference>
<dbReference type="PROSITE" id="PS51863">
    <property type="entry name" value="LCN_CSAB"/>
    <property type="match status" value="1"/>
</dbReference>
<proteinExistence type="evidence at protein level"/>
<accession>P0DUI1</accession>
<feature type="signal peptide" evidence="8">
    <location>
        <begin position="1"/>
        <end position="19"/>
    </location>
</feature>
<feature type="chain" id="PRO_0000452428" description="Beta-toxin Ct16" evidence="8">
    <location>
        <begin position="20"/>
        <end position="82"/>
    </location>
</feature>
<feature type="domain" description="LCN-type CS-alpha/beta" evidence="3">
    <location>
        <begin position="21"/>
        <end position="80"/>
    </location>
</feature>
<feature type="modified residue" description="Threonine amide" evidence="8">
    <location>
        <position position="82"/>
    </location>
</feature>
<feature type="disulfide bond" evidence="2">
    <location>
        <begin position="31"/>
        <end position="79"/>
    </location>
</feature>
<feature type="disulfide bond" evidence="2">
    <location>
        <begin position="35"/>
        <end position="55"/>
    </location>
</feature>
<feature type="disulfide bond" evidence="2">
    <location>
        <begin position="41"/>
        <end position="62"/>
    </location>
</feature>
<feature type="disulfide bond" evidence="2">
    <location>
        <begin position="45"/>
        <end position="64"/>
    </location>
</feature>
<protein>
    <recommendedName>
        <fullName evidence="6">Beta-toxin Ct16</fullName>
    </recommendedName>
</protein>
<organism>
    <name type="scientific">Centruroides tecomanus</name>
    <name type="common">Scorpion</name>
    <name type="synonym">Centruroides limpidus tecomanus</name>
    <dbReference type="NCBI Taxonomy" id="1028682"/>
    <lineage>
        <taxon>Eukaryota</taxon>
        <taxon>Metazoa</taxon>
        <taxon>Ecdysozoa</taxon>
        <taxon>Arthropoda</taxon>
        <taxon>Chelicerata</taxon>
        <taxon>Arachnida</taxon>
        <taxon>Scorpiones</taxon>
        <taxon>Buthida</taxon>
        <taxon>Buthoidea</taxon>
        <taxon>Buthidae</taxon>
        <taxon>Centruroides</taxon>
    </lineage>
</organism>
<sequence>MNYFILLFVATFLLLDVNCKKDGYPVDANNCKFECWKNEYCDELCKAKRAESGYCYKLKLSCWCEGLPDDEPTKTSDRCYGTGR</sequence>
<keyword id="KW-0027">Amidation</keyword>
<keyword id="KW-0903">Direct protein sequencing</keyword>
<keyword id="KW-1015">Disulfide bond</keyword>
<keyword id="KW-0872">Ion channel impairing toxin</keyword>
<keyword id="KW-0528">Neurotoxin</keyword>
<keyword id="KW-0964">Secreted</keyword>
<keyword id="KW-0732">Signal</keyword>
<keyword id="KW-0800">Toxin</keyword>
<keyword id="KW-0738">Voltage-gated sodium channel impairing toxin</keyword>
<comment type="function">
    <text evidence="1 5">Alpha toxins bind voltage-independently at site-3 of sodium channels (Nav) and inhibit the inactivation of the activated channels, thereby blocking neuronal transmission (By similarity). Is possibly toxic to mice (PubMed:27130039).</text>
</comment>
<comment type="subcellular location">
    <subcellularLocation>
        <location evidence="4">Secreted</location>
    </subcellularLocation>
</comment>
<comment type="tissue specificity">
    <text evidence="8">Expressed by the venom gland.</text>
</comment>
<comment type="domain">
    <text evidence="7">Has the structural arrangement of an alpha-helix connected to antiparallel beta-sheets by disulfide bonds (CS-alpha/beta).</text>
</comment>
<comment type="mass spectrometry">
    <text>Average mass.</text>
</comment>
<comment type="similarity">
    <text evidence="7">Belongs to the long (4 C-C) scorpion toxin superfamily. Sodium channel inhibitor family. Alpha subfamily.</text>
</comment>
<evidence type="ECO:0000250" key="1">
    <source>
        <dbReference type="UniProtKB" id="F8UWP3"/>
    </source>
</evidence>
<evidence type="ECO:0000250" key="2">
    <source>
        <dbReference type="UniProtKB" id="P01496"/>
    </source>
</evidence>
<evidence type="ECO:0000255" key="3">
    <source>
        <dbReference type="PROSITE-ProRule" id="PRU01210"/>
    </source>
</evidence>
<evidence type="ECO:0000269" key="4">
    <source>
    </source>
</evidence>
<evidence type="ECO:0000269" key="5">
    <source>
    </source>
</evidence>
<evidence type="ECO:0000303" key="6">
    <source>
    </source>
</evidence>
<evidence type="ECO:0000305" key="7"/>
<evidence type="ECO:0000305" key="8">
    <source>
    </source>
</evidence>
<name>SCX16_CENTE</name>